<gene>
    <name evidence="1" type="primary">gcvT</name>
    <name type="ordered locus">RBAM_022890</name>
</gene>
<dbReference type="EC" id="2.1.2.10" evidence="1"/>
<dbReference type="EMBL" id="CP000560">
    <property type="protein sequence ID" value="ABS74650.1"/>
    <property type="molecule type" value="Genomic_DNA"/>
</dbReference>
<dbReference type="RefSeq" id="WP_012117974.1">
    <property type="nucleotide sequence ID" value="NC_009725.2"/>
</dbReference>
<dbReference type="SMR" id="A7Z6M4"/>
<dbReference type="GeneID" id="93081427"/>
<dbReference type="KEGG" id="bay:RBAM_022890"/>
<dbReference type="HOGENOM" id="CLU_007884_10_2_9"/>
<dbReference type="Proteomes" id="UP000001120">
    <property type="component" value="Chromosome"/>
</dbReference>
<dbReference type="GO" id="GO:0005829">
    <property type="term" value="C:cytosol"/>
    <property type="evidence" value="ECO:0007669"/>
    <property type="project" value="TreeGrafter"/>
</dbReference>
<dbReference type="GO" id="GO:0005960">
    <property type="term" value="C:glycine cleavage complex"/>
    <property type="evidence" value="ECO:0007669"/>
    <property type="project" value="InterPro"/>
</dbReference>
<dbReference type="GO" id="GO:0004047">
    <property type="term" value="F:aminomethyltransferase activity"/>
    <property type="evidence" value="ECO:0007669"/>
    <property type="project" value="UniProtKB-UniRule"/>
</dbReference>
<dbReference type="GO" id="GO:0008483">
    <property type="term" value="F:transaminase activity"/>
    <property type="evidence" value="ECO:0007669"/>
    <property type="project" value="UniProtKB-KW"/>
</dbReference>
<dbReference type="GO" id="GO:0019464">
    <property type="term" value="P:glycine decarboxylation via glycine cleavage system"/>
    <property type="evidence" value="ECO:0007669"/>
    <property type="project" value="UniProtKB-UniRule"/>
</dbReference>
<dbReference type="FunFam" id="2.40.30.110:FF:000003">
    <property type="entry name" value="Aminomethyltransferase"/>
    <property type="match status" value="1"/>
</dbReference>
<dbReference type="FunFam" id="3.30.70.1400:FF:000001">
    <property type="entry name" value="Aminomethyltransferase"/>
    <property type="match status" value="1"/>
</dbReference>
<dbReference type="FunFam" id="4.10.1250.10:FF:000001">
    <property type="entry name" value="Aminomethyltransferase"/>
    <property type="match status" value="1"/>
</dbReference>
<dbReference type="Gene3D" id="2.40.30.110">
    <property type="entry name" value="Aminomethyltransferase beta-barrel domains"/>
    <property type="match status" value="1"/>
</dbReference>
<dbReference type="Gene3D" id="3.30.70.1400">
    <property type="entry name" value="Aminomethyltransferase beta-barrel domains"/>
    <property type="match status" value="1"/>
</dbReference>
<dbReference type="Gene3D" id="4.10.1250.10">
    <property type="entry name" value="Aminomethyltransferase fragment"/>
    <property type="match status" value="1"/>
</dbReference>
<dbReference type="Gene3D" id="3.30.1360.120">
    <property type="entry name" value="Probable tRNA modification gtpase trme, domain 1"/>
    <property type="match status" value="1"/>
</dbReference>
<dbReference type="HAMAP" id="MF_00259">
    <property type="entry name" value="GcvT"/>
    <property type="match status" value="1"/>
</dbReference>
<dbReference type="InterPro" id="IPR006223">
    <property type="entry name" value="GCS_T"/>
</dbReference>
<dbReference type="InterPro" id="IPR022903">
    <property type="entry name" value="GCS_T_bac"/>
</dbReference>
<dbReference type="InterPro" id="IPR013977">
    <property type="entry name" value="GCST_C"/>
</dbReference>
<dbReference type="InterPro" id="IPR006222">
    <property type="entry name" value="GCV_T_N"/>
</dbReference>
<dbReference type="InterPro" id="IPR028896">
    <property type="entry name" value="GcvT/YgfZ/DmdA"/>
</dbReference>
<dbReference type="InterPro" id="IPR029043">
    <property type="entry name" value="GcvT/YgfZ_C"/>
</dbReference>
<dbReference type="InterPro" id="IPR027266">
    <property type="entry name" value="TrmE/GcvT_dom1"/>
</dbReference>
<dbReference type="NCBIfam" id="TIGR00528">
    <property type="entry name" value="gcvT"/>
    <property type="match status" value="1"/>
</dbReference>
<dbReference type="NCBIfam" id="NF001567">
    <property type="entry name" value="PRK00389.1"/>
    <property type="match status" value="1"/>
</dbReference>
<dbReference type="PANTHER" id="PTHR43757">
    <property type="entry name" value="AMINOMETHYLTRANSFERASE"/>
    <property type="match status" value="1"/>
</dbReference>
<dbReference type="PANTHER" id="PTHR43757:SF2">
    <property type="entry name" value="AMINOMETHYLTRANSFERASE, MITOCHONDRIAL"/>
    <property type="match status" value="1"/>
</dbReference>
<dbReference type="Pfam" id="PF01571">
    <property type="entry name" value="GCV_T"/>
    <property type="match status" value="1"/>
</dbReference>
<dbReference type="Pfam" id="PF08669">
    <property type="entry name" value="GCV_T_C"/>
    <property type="match status" value="1"/>
</dbReference>
<dbReference type="PIRSF" id="PIRSF006487">
    <property type="entry name" value="GcvT"/>
    <property type="match status" value="1"/>
</dbReference>
<dbReference type="SUPFAM" id="SSF101790">
    <property type="entry name" value="Aminomethyltransferase beta-barrel domain"/>
    <property type="match status" value="1"/>
</dbReference>
<dbReference type="SUPFAM" id="SSF103025">
    <property type="entry name" value="Folate-binding domain"/>
    <property type="match status" value="1"/>
</dbReference>
<keyword id="KW-0032">Aminotransferase</keyword>
<keyword id="KW-0808">Transferase</keyword>
<accession>A7Z6M4</accession>
<comment type="function">
    <text evidence="1">The glycine cleavage system catalyzes the degradation of glycine.</text>
</comment>
<comment type="catalytic activity">
    <reaction evidence="1">
        <text>N(6)-[(R)-S(8)-aminomethyldihydrolipoyl]-L-lysyl-[protein] + (6S)-5,6,7,8-tetrahydrofolate = N(6)-[(R)-dihydrolipoyl]-L-lysyl-[protein] + (6R)-5,10-methylene-5,6,7,8-tetrahydrofolate + NH4(+)</text>
        <dbReference type="Rhea" id="RHEA:16945"/>
        <dbReference type="Rhea" id="RHEA-COMP:10475"/>
        <dbReference type="Rhea" id="RHEA-COMP:10492"/>
        <dbReference type="ChEBI" id="CHEBI:15636"/>
        <dbReference type="ChEBI" id="CHEBI:28938"/>
        <dbReference type="ChEBI" id="CHEBI:57453"/>
        <dbReference type="ChEBI" id="CHEBI:83100"/>
        <dbReference type="ChEBI" id="CHEBI:83143"/>
        <dbReference type="EC" id="2.1.2.10"/>
    </reaction>
</comment>
<comment type="subunit">
    <text evidence="1">The glycine cleavage system is composed of four proteins: P, T, L and H.</text>
</comment>
<comment type="similarity">
    <text evidence="1">Belongs to the GcvT family.</text>
</comment>
<evidence type="ECO:0000255" key="1">
    <source>
        <dbReference type="HAMAP-Rule" id="MF_00259"/>
    </source>
</evidence>
<organism>
    <name type="scientific">Bacillus velezensis (strain DSM 23117 / BGSC 10A6 / LMG 26770 / FZB42)</name>
    <name type="common">Bacillus amyloliquefaciens subsp. plantarum</name>
    <dbReference type="NCBI Taxonomy" id="326423"/>
    <lineage>
        <taxon>Bacteria</taxon>
        <taxon>Bacillati</taxon>
        <taxon>Bacillota</taxon>
        <taxon>Bacilli</taxon>
        <taxon>Bacillales</taxon>
        <taxon>Bacillaceae</taxon>
        <taxon>Bacillus</taxon>
        <taxon>Bacillus amyloliquefaciens group</taxon>
    </lineage>
</organism>
<sequence length="366" mass="40317">MLKRTPLYDVYKEYGGKTIDFGGWELPVQFSSIKEEHEAVRTKAGLFDVSHMGEVEVSGKDALSFLQKMMTNDVADLKPGNALYTAMCYPDGGTVDDLLIYQKSESCYLLVINASNIEKDIAWLTEHTEGDVTLTNQSDGISLLAVQGPNAQSVLAKLTECDLSSLKPFTFIDKADVAGRQVLLSRTGYTGEDGFELYCRNEDAVHLFKEILAAGEHEGLVPCGLGARDTLRFEAKLALYGQELTKDITPIEAGIGFAVKHKKDSDFFGKSVLREQKEKGAPRKLVGLEMIEKGIPRHGYAVKKDGVPIGEVTTGTQSPTLKKNIGLALIKTEFSEVGTEVEVEIRKKTVKAKIVRTPFYKRPKQS</sequence>
<protein>
    <recommendedName>
        <fullName evidence="1">Aminomethyltransferase</fullName>
        <ecNumber evidence="1">2.1.2.10</ecNumber>
    </recommendedName>
    <alternativeName>
        <fullName evidence="1">Glycine cleavage system T protein</fullName>
    </alternativeName>
</protein>
<proteinExistence type="inferred from homology"/>
<reference key="1">
    <citation type="journal article" date="2007" name="Nat. Biotechnol.">
        <title>Comparative analysis of the complete genome sequence of the plant growth-promoting bacterium Bacillus amyloliquefaciens FZB42.</title>
        <authorList>
            <person name="Chen X.H."/>
            <person name="Koumoutsi A."/>
            <person name="Scholz R."/>
            <person name="Eisenreich A."/>
            <person name="Schneider K."/>
            <person name="Heinemeyer I."/>
            <person name="Morgenstern B."/>
            <person name="Voss B."/>
            <person name="Hess W.R."/>
            <person name="Reva O."/>
            <person name="Junge H."/>
            <person name="Voigt B."/>
            <person name="Jungblut P.R."/>
            <person name="Vater J."/>
            <person name="Suessmuth R."/>
            <person name="Liesegang H."/>
            <person name="Strittmatter A."/>
            <person name="Gottschalk G."/>
            <person name="Borriss R."/>
        </authorList>
    </citation>
    <scope>NUCLEOTIDE SEQUENCE [LARGE SCALE GENOMIC DNA]</scope>
    <source>
        <strain>DSM 23117 / BGSC 10A6 / LMG 26770 / FZB42</strain>
    </source>
</reference>
<feature type="chain" id="PRO_1000059079" description="Aminomethyltransferase">
    <location>
        <begin position="1"/>
        <end position="366"/>
    </location>
</feature>
<name>GCST_BACVZ</name>